<comment type="function">
    <text evidence="1">Could be a nuclease involved in processing of the 5'-end of pre-16S rRNA.</text>
</comment>
<comment type="subcellular location">
    <subcellularLocation>
        <location evidence="1">Cytoplasm</location>
    </subcellularLocation>
</comment>
<comment type="similarity">
    <text evidence="1">Belongs to the YqgF nuclease family.</text>
</comment>
<evidence type="ECO:0000255" key="1">
    <source>
        <dbReference type="HAMAP-Rule" id="MF_00651"/>
    </source>
</evidence>
<reference key="1">
    <citation type="journal article" date="2006" name="Proc. Natl. Acad. Sci. U.S.A.">
        <title>Comparative genomics of the lactic acid bacteria.</title>
        <authorList>
            <person name="Makarova K.S."/>
            <person name="Slesarev A."/>
            <person name="Wolf Y.I."/>
            <person name="Sorokin A."/>
            <person name="Mirkin B."/>
            <person name="Koonin E.V."/>
            <person name="Pavlov A."/>
            <person name="Pavlova N."/>
            <person name="Karamychev V."/>
            <person name="Polouchine N."/>
            <person name="Shakhova V."/>
            <person name="Grigoriev I."/>
            <person name="Lou Y."/>
            <person name="Rohksar D."/>
            <person name="Lucas S."/>
            <person name="Huang K."/>
            <person name="Goodstein D.M."/>
            <person name="Hawkins T."/>
            <person name="Plengvidhya V."/>
            <person name="Welker D."/>
            <person name="Hughes J."/>
            <person name="Goh Y."/>
            <person name="Benson A."/>
            <person name="Baldwin K."/>
            <person name="Lee J.-H."/>
            <person name="Diaz-Muniz I."/>
            <person name="Dosti B."/>
            <person name="Smeianov V."/>
            <person name="Wechter W."/>
            <person name="Barabote R."/>
            <person name="Lorca G."/>
            <person name="Altermann E."/>
            <person name="Barrangou R."/>
            <person name="Ganesan B."/>
            <person name="Xie Y."/>
            <person name="Rawsthorne H."/>
            <person name="Tamir D."/>
            <person name="Parker C."/>
            <person name="Breidt F."/>
            <person name="Broadbent J.R."/>
            <person name="Hutkins R."/>
            <person name="O'Sullivan D."/>
            <person name="Steele J."/>
            <person name="Unlu G."/>
            <person name="Saier M.H. Jr."/>
            <person name="Klaenhammer T."/>
            <person name="Richardson P."/>
            <person name="Kozyavkin S."/>
            <person name="Weimer B.C."/>
            <person name="Mills D.A."/>
        </authorList>
    </citation>
    <scope>NUCLEOTIDE SEQUENCE [LARGE SCALE GENOMIC DNA]</scope>
    <source>
        <strain>SK11</strain>
    </source>
</reference>
<name>YQGF_LACLS</name>
<proteinExistence type="inferred from homology"/>
<dbReference type="EC" id="3.1.-.-" evidence="1"/>
<dbReference type="EMBL" id="CP000425">
    <property type="protein sequence ID" value="ABJ71759.1"/>
    <property type="molecule type" value="Genomic_DNA"/>
</dbReference>
<dbReference type="SMR" id="Q032W3"/>
<dbReference type="KEGG" id="llc:LACR_0138"/>
<dbReference type="HOGENOM" id="CLU_098240_2_0_9"/>
<dbReference type="Proteomes" id="UP000000240">
    <property type="component" value="Chromosome"/>
</dbReference>
<dbReference type="GO" id="GO:0005829">
    <property type="term" value="C:cytosol"/>
    <property type="evidence" value="ECO:0007669"/>
    <property type="project" value="TreeGrafter"/>
</dbReference>
<dbReference type="GO" id="GO:0004518">
    <property type="term" value="F:nuclease activity"/>
    <property type="evidence" value="ECO:0007669"/>
    <property type="project" value="UniProtKB-KW"/>
</dbReference>
<dbReference type="GO" id="GO:0000967">
    <property type="term" value="P:rRNA 5'-end processing"/>
    <property type="evidence" value="ECO:0007669"/>
    <property type="project" value="UniProtKB-UniRule"/>
</dbReference>
<dbReference type="CDD" id="cd16964">
    <property type="entry name" value="YqgF"/>
    <property type="match status" value="1"/>
</dbReference>
<dbReference type="Gene3D" id="3.30.420.140">
    <property type="entry name" value="YqgF/RNase H-like domain"/>
    <property type="match status" value="1"/>
</dbReference>
<dbReference type="HAMAP" id="MF_00651">
    <property type="entry name" value="Nuclease_YqgF"/>
    <property type="match status" value="1"/>
</dbReference>
<dbReference type="InterPro" id="IPR012337">
    <property type="entry name" value="RNaseH-like_sf"/>
</dbReference>
<dbReference type="InterPro" id="IPR005227">
    <property type="entry name" value="YqgF"/>
</dbReference>
<dbReference type="InterPro" id="IPR006641">
    <property type="entry name" value="YqgF/RNaseH-like_dom"/>
</dbReference>
<dbReference type="InterPro" id="IPR037027">
    <property type="entry name" value="YqgF/RNaseH-like_dom_sf"/>
</dbReference>
<dbReference type="NCBIfam" id="TIGR00250">
    <property type="entry name" value="RNAse_H_YqgF"/>
    <property type="match status" value="1"/>
</dbReference>
<dbReference type="PANTHER" id="PTHR33317">
    <property type="entry name" value="POLYNUCLEOTIDYL TRANSFERASE, RIBONUCLEASE H-LIKE SUPERFAMILY PROTEIN"/>
    <property type="match status" value="1"/>
</dbReference>
<dbReference type="PANTHER" id="PTHR33317:SF4">
    <property type="entry name" value="POLYNUCLEOTIDYL TRANSFERASE, RIBONUCLEASE H-LIKE SUPERFAMILY PROTEIN"/>
    <property type="match status" value="1"/>
</dbReference>
<dbReference type="Pfam" id="PF03652">
    <property type="entry name" value="RuvX"/>
    <property type="match status" value="1"/>
</dbReference>
<dbReference type="SMART" id="SM00732">
    <property type="entry name" value="YqgFc"/>
    <property type="match status" value="1"/>
</dbReference>
<dbReference type="SUPFAM" id="SSF53098">
    <property type="entry name" value="Ribonuclease H-like"/>
    <property type="match status" value="1"/>
</dbReference>
<gene>
    <name type="ordered locus">LACR_0138</name>
</gene>
<keyword id="KW-0963">Cytoplasm</keyword>
<keyword id="KW-0378">Hydrolase</keyword>
<keyword id="KW-0540">Nuclease</keyword>
<keyword id="KW-0690">Ribosome biogenesis</keyword>
<feature type="chain" id="PRO_1000061531" description="Putative pre-16S rRNA nuclease">
    <location>
        <begin position="1"/>
        <end position="143"/>
    </location>
</feature>
<protein>
    <recommendedName>
        <fullName evidence="1">Putative pre-16S rRNA nuclease</fullName>
        <ecNumber evidence="1">3.1.-.-</ecNumber>
    </recommendedName>
</protein>
<organism>
    <name type="scientific">Lactococcus lactis subsp. cremoris (strain SK11)</name>
    <dbReference type="NCBI Taxonomy" id="272622"/>
    <lineage>
        <taxon>Bacteria</taxon>
        <taxon>Bacillati</taxon>
        <taxon>Bacillota</taxon>
        <taxon>Bacilli</taxon>
        <taxon>Lactobacillales</taxon>
        <taxon>Streptococcaceae</taxon>
        <taxon>Lactococcus</taxon>
        <taxon>Lactococcus cremoris subsp. cremoris</taxon>
    </lineage>
</organism>
<accession>Q032W3</accession>
<sequence length="143" mass="15683">MFARILGLDVGTKTVGVSVSDLLGMTAQPVETIKIDSEAGELGFDRLAVLIKEYKPEKVVLGLPKHMNGDEGIRAEASRDYGTKLANEFSLEVAYQDERLTTAQAEKVLIDGGVRRKDRKKSIDKLAAVLILQNYLDAHALKL</sequence>